<organismHost>
    <name type="scientific">Homo sapiens</name>
    <name type="common">Human</name>
    <dbReference type="NCBI Taxonomy" id="9606"/>
</organismHost>
<protein>
    <recommendedName>
        <fullName>Protein UL56</fullName>
    </recommendedName>
</protein>
<accession>P36297</accession>
<organism>
    <name type="scientific">Human herpesvirus 1 (strain HFEM)</name>
    <name type="common">HHV-1</name>
    <name type="synonym">Human herpes simplex virus 1</name>
    <dbReference type="NCBI Taxonomy" id="10303"/>
    <lineage>
        <taxon>Viruses</taxon>
        <taxon>Duplodnaviria</taxon>
        <taxon>Heunggongvirae</taxon>
        <taxon>Peploviricota</taxon>
        <taxon>Herviviricetes</taxon>
        <taxon>Herpesvirales</taxon>
        <taxon>Orthoherpesviridae</taxon>
        <taxon>Alphaherpesvirinae</taxon>
        <taxon>Simplexvirus</taxon>
        <taxon>Simplexvirus humanalpha1</taxon>
        <taxon>Human herpesvirus 1</taxon>
    </lineage>
</organism>
<dbReference type="EMBL" id="M90438">
    <property type="status" value="NOT_ANNOTATED_CDS"/>
    <property type="molecule type" value="Genomic_DNA"/>
</dbReference>
<dbReference type="PIR" id="C48560">
    <property type="entry name" value="C48560"/>
</dbReference>
<dbReference type="SMR" id="P36297"/>
<dbReference type="TCDB" id="9.B.350.1.3">
    <property type="family name" value="the pseudorabies virus protein ul56 (ul56) family"/>
</dbReference>
<dbReference type="InterPro" id="IPR007620">
    <property type="entry name" value="Herpes_UL56"/>
</dbReference>
<dbReference type="Pfam" id="PF04534">
    <property type="entry name" value="Herpes_UL56"/>
    <property type="match status" value="1"/>
</dbReference>
<sequence length="233" mass="25296">MASEAAQPDAGLWSAGHAFADPPPPYDSLSGRNEGRLSLLIWTPPRTHLHRTLLGPCRPCQFRQPPPERARRRSGAAHALPPSEPLGAPGAAPNDVRSAGVLALAGYWQPPSFFRKPGLWPHPTSQGTSCRASRCTPRLCRTTPQPMPLSWPFVRPNSRPGLWRPTTSDERLTRARGGLLGSIRASCTGPNAARGSYDHAPYRREGCCGVVGRHAVFGVVAIVVVIILVFLWR</sequence>
<comment type="similarity">
    <text evidence="2">Belongs to the herpesviridae UL56 family.</text>
</comment>
<feature type="chain" id="PRO_0000116124" description="Protein UL56">
    <location>
        <begin position="1"/>
        <end position="233"/>
    </location>
</feature>
<feature type="region of interest" description="Disordered" evidence="1">
    <location>
        <begin position="57"/>
        <end position="92"/>
    </location>
</feature>
<name>UL56_HHV1E</name>
<evidence type="ECO:0000256" key="1">
    <source>
        <dbReference type="SAM" id="MobiDB-lite"/>
    </source>
</evidence>
<evidence type="ECO:0000305" key="2"/>
<gene>
    <name type="primary">UL56</name>
</gene>
<proteinExistence type="inferred from homology"/>
<reference key="1">
    <citation type="journal article" date="1992" name="Virus Res.">
        <title>Determination of the coding capacity of the BamHI DNA fragment B of apathogenic Herpes simplex virus type 1 strain HFEM by DNA nucleotide sequence analysis.</title>
        <authorList>
            <person name="Rosen-Wolff A."/>
            <person name="Frank S."/>
            <person name="Raab K."/>
            <person name="Moyal M."/>
            <person name="Becker Y."/>
            <person name="Darai G."/>
        </authorList>
    </citation>
    <scope>NUCLEOTIDE SEQUENCE [GENOMIC DNA]</scope>
</reference>